<evidence type="ECO:0000250" key="1"/>
<evidence type="ECO:0000305" key="2"/>
<dbReference type="EC" id="1.3.1.9"/>
<dbReference type="EMBL" id="AL591688">
    <property type="protein sequence ID" value="CAC41683.1"/>
    <property type="molecule type" value="Genomic_DNA"/>
</dbReference>
<dbReference type="RefSeq" id="NP_384352.1">
    <property type="nucleotide sequence ID" value="NC_003047.1"/>
</dbReference>
<dbReference type="RefSeq" id="WP_003534375.1">
    <property type="nucleotide sequence ID" value="NC_003047.1"/>
</dbReference>
<dbReference type="SMR" id="P58381"/>
<dbReference type="EnsemblBacteria" id="CAC41683">
    <property type="protein sequence ID" value="CAC41683"/>
    <property type="gene ID" value="SMc00326"/>
</dbReference>
<dbReference type="KEGG" id="sme:SMc00326"/>
<dbReference type="PATRIC" id="fig|266834.11.peg.1613"/>
<dbReference type="eggNOG" id="COG0623">
    <property type="taxonomic scope" value="Bacteria"/>
</dbReference>
<dbReference type="HOGENOM" id="CLU_010194_10_1_5"/>
<dbReference type="OrthoDB" id="9803628at2"/>
<dbReference type="UniPathway" id="UPA00094"/>
<dbReference type="Proteomes" id="UP000001976">
    <property type="component" value="Chromosome"/>
</dbReference>
<dbReference type="GO" id="GO:0005886">
    <property type="term" value="C:plasma membrane"/>
    <property type="evidence" value="ECO:0007669"/>
    <property type="project" value="UniProtKB-SubCell"/>
</dbReference>
<dbReference type="GO" id="GO:0004318">
    <property type="term" value="F:enoyl-[acyl-carrier-protein] reductase (NADH) activity"/>
    <property type="evidence" value="ECO:0007669"/>
    <property type="project" value="UniProtKB-EC"/>
</dbReference>
<dbReference type="GO" id="GO:0006633">
    <property type="term" value="P:fatty acid biosynthetic process"/>
    <property type="evidence" value="ECO:0007669"/>
    <property type="project" value="UniProtKB-UniPathway"/>
</dbReference>
<dbReference type="CDD" id="cd05372">
    <property type="entry name" value="ENR_SDR"/>
    <property type="match status" value="1"/>
</dbReference>
<dbReference type="FunFam" id="1.10.8.400:FF:000001">
    <property type="entry name" value="Enoyl-[acyl-carrier-protein] reductase [NADH]"/>
    <property type="match status" value="1"/>
</dbReference>
<dbReference type="FunFam" id="3.40.50.720:FF:000054">
    <property type="entry name" value="Enoyl-[acyl-carrier-protein] reductase [NADH]"/>
    <property type="match status" value="1"/>
</dbReference>
<dbReference type="Gene3D" id="1.10.8.400">
    <property type="entry name" value="Enoyl acyl carrier protein reductase"/>
    <property type="match status" value="1"/>
</dbReference>
<dbReference type="Gene3D" id="3.40.50.720">
    <property type="entry name" value="NAD(P)-binding Rossmann-like Domain"/>
    <property type="match status" value="1"/>
</dbReference>
<dbReference type="InterPro" id="IPR014358">
    <property type="entry name" value="Enoyl-ACP_Rdtase_NADH"/>
</dbReference>
<dbReference type="InterPro" id="IPR036291">
    <property type="entry name" value="NAD(P)-bd_dom_sf"/>
</dbReference>
<dbReference type="InterPro" id="IPR002347">
    <property type="entry name" value="SDR_fam"/>
</dbReference>
<dbReference type="NCBIfam" id="NF005078">
    <property type="entry name" value="PRK06505.1"/>
    <property type="match status" value="1"/>
</dbReference>
<dbReference type="PANTHER" id="PTHR43159">
    <property type="entry name" value="ENOYL-[ACYL-CARRIER-PROTEIN] REDUCTASE"/>
    <property type="match status" value="1"/>
</dbReference>
<dbReference type="PANTHER" id="PTHR43159:SF2">
    <property type="entry name" value="ENOYL-[ACYL-CARRIER-PROTEIN] REDUCTASE [NADH], CHLOROPLASTIC"/>
    <property type="match status" value="1"/>
</dbReference>
<dbReference type="Pfam" id="PF13561">
    <property type="entry name" value="adh_short_C2"/>
    <property type="match status" value="1"/>
</dbReference>
<dbReference type="PIRSF" id="PIRSF000094">
    <property type="entry name" value="Enoyl-ACP_rdct"/>
    <property type="match status" value="1"/>
</dbReference>
<dbReference type="PRINTS" id="PR00081">
    <property type="entry name" value="GDHRDH"/>
</dbReference>
<dbReference type="SUPFAM" id="SSF51735">
    <property type="entry name" value="NAD(P)-binding Rossmann-fold domains"/>
    <property type="match status" value="1"/>
</dbReference>
<organism>
    <name type="scientific">Rhizobium meliloti (strain 1021)</name>
    <name type="common">Ensifer meliloti</name>
    <name type="synonym">Sinorhizobium meliloti</name>
    <dbReference type="NCBI Taxonomy" id="266834"/>
    <lineage>
        <taxon>Bacteria</taxon>
        <taxon>Pseudomonadati</taxon>
        <taxon>Pseudomonadota</taxon>
        <taxon>Alphaproteobacteria</taxon>
        <taxon>Hyphomicrobiales</taxon>
        <taxon>Rhizobiaceae</taxon>
        <taxon>Sinorhizobium/Ensifer group</taxon>
        <taxon>Sinorhizobium</taxon>
    </lineage>
</organism>
<gene>
    <name type="primary">fabI2</name>
    <name type="ordered locus">R00246</name>
    <name type="ORF">SMc00326</name>
</gene>
<accession>P58381</accession>
<reference key="1">
    <citation type="journal article" date="2001" name="Proc. Natl. Acad. Sci. U.S.A.">
        <title>Analysis of the chromosome sequence of the legume symbiont Sinorhizobium meliloti strain 1021.</title>
        <authorList>
            <person name="Capela D."/>
            <person name="Barloy-Hubler F."/>
            <person name="Gouzy J."/>
            <person name="Bothe G."/>
            <person name="Ampe F."/>
            <person name="Batut J."/>
            <person name="Boistard P."/>
            <person name="Becker A."/>
            <person name="Boutry M."/>
            <person name="Cadieu E."/>
            <person name="Dreano S."/>
            <person name="Gloux S."/>
            <person name="Godrie T."/>
            <person name="Goffeau A."/>
            <person name="Kahn D."/>
            <person name="Kiss E."/>
            <person name="Lelaure V."/>
            <person name="Masuy D."/>
            <person name="Pohl T."/>
            <person name="Portetelle D."/>
            <person name="Puehler A."/>
            <person name="Purnelle B."/>
            <person name="Ramsperger U."/>
            <person name="Renard C."/>
            <person name="Thebault P."/>
            <person name="Vandenbol M."/>
            <person name="Weidner S."/>
            <person name="Galibert F."/>
        </authorList>
    </citation>
    <scope>NUCLEOTIDE SEQUENCE [LARGE SCALE GENOMIC DNA]</scope>
    <source>
        <strain>1021</strain>
    </source>
</reference>
<reference key="2">
    <citation type="journal article" date="2001" name="Science">
        <title>The composite genome of the legume symbiont Sinorhizobium meliloti.</title>
        <authorList>
            <person name="Galibert F."/>
            <person name="Finan T.M."/>
            <person name="Long S.R."/>
            <person name="Puehler A."/>
            <person name="Abola P."/>
            <person name="Ampe F."/>
            <person name="Barloy-Hubler F."/>
            <person name="Barnett M.J."/>
            <person name="Becker A."/>
            <person name="Boistard P."/>
            <person name="Bothe G."/>
            <person name="Boutry M."/>
            <person name="Bowser L."/>
            <person name="Buhrmester J."/>
            <person name="Cadieu E."/>
            <person name="Capela D."/>
            <person name="Chain P."/>
            <person name="Cowie A."/>
            <person name="Davis R.W."/>
            <person name="Dreano S."/>
            <person name="Federspiel N.A."/>
            <person name="Fisher R.F."/>
            <person name="Gloux S."/>
            <person name="Godrie T."/>
            <person name="Goffeau A."/>
            <person name="Golding B."/>
            <person name="Gouzy J."/>
            <person name="Gurjal M."/>
            <person name="Hernandez-Lucas I."/>
            <person name="Hong A."/>
            <person name="Huizar L."/>
            <person name="Hyman R.W."/>
            <person name="Jones T."/>
            <person name="Kahn D."/>
            <person name="Kahn M.L."/>
            <person name="Kalman S."/>
            <person name="Keating D.H."/>
            <person name="Kiss E."/>
            <person name="Komp C."/>
            <person name="Lelaure V."/>
            <person name="Masuy D."/>
            <person name="Palm C."/>
            <person name="Peck M.C."/>
            <person name="Pohl T.M."/>
            <person name="Portetelle D."/>
            <person name="Purnelle B."/>
            <person name="Ramsperger U."/>
            <person name="Surzycki R."/>
            <person name="Thebault P."/>
            <person name="Vandenbol M."/>
            <person name="Vorhoelter F.J."/>
            <person name="Weidner S."/>
            <person name="Wells D.H."/>
            <person name="Wong K."/>
            <person name="Yeh K.-C."/>
            <person name="Batut J."/>
        </authorList>
    </citation>
    <scope>NUCLEOTIDE SEQUENCE [LARGE SCALE GENOMIC DNA]</scope>
    <source>
        <strain>1021</strain>
    </source>
</reference>
<proteinExistence type="inferred from homology"/>
<name>FABI2_RHIME</name>
<sequence length="268" mass="28672">MNGLMNGKRGLIMGVANSHSIAWGIAKSLAAQGAELAFTYQGEALGKRVKPLAAEVNSDFLLPCDVEDIGSVDAVVDAIKERWGKLDFVVHAIGFSDKNELKGLYADTTRDNFSRTMVISCFSFTEIAKRAAELMSEGGTMLTLTYGGSMRVMPNYNVMGVAKAALEASVRYLAADYGSRGIRVNAISAGPIRTLAGAGISDARAMLSWQQKNSPLRRTVTIEDVGSSALYLLSDLSRGVTGEIHYVDSGYNITSMPTLEALRVADAD</sequence>
<comment type="catalytic activity">
    <reaction>
        <text>a 2,3-saturated acyl-[ACP] + NAD(+) = a (2E)-enoyl-[ACP] + NADH + H(+)</text>
        <dbReference type="Rhea" id="RHEA:10240"/>
        <dbReference type="Rhea" id="RHEA-COMP:9925"/>
        <dbReference type="Rhea" id="RHEA-COMP:9926"/>
        <dbReference type="ChEBI" id="CHEBI:15378"/>
        <dbReference type="ChEBI" id="CHEBI:57540"/>
        <dbReference type="ChEBI" id="CHEBI:57945"/>
        <dbReference type="ChEBI" id="CHEBI:78784"/>
        <dbReference type="ChEBI" id="CHEBI:78785"/>
        <dbReference type="EC" id="1.3.1.9"/>
    </reaction>
</comment>
<comment type="pathway">
    <text>Lipid metabolism; fatty acid biosynthesis.</text>
</comment>
<comment type="subcellular location">
    <subcellularLocation>
        <location evidence="1">Cell inner membrane</location>
        <topology evidence="1">Peripheral membrane protein</topology>
    </subcellularLocation>
</comment>
<comment type="similarity">
    <text evidence="2">Belongs to the short-chain dehydrogenases/reductases (SDR) family. FabI subfamily.</text>
</comment>
<feature type="chain" id="PRO_0000054906" description="Enoyl-[acyl-carrier-protein] reductase [NADH] 2">
    <location>
        <begin position="1"/>
        <end position="268"/>
    </location>
</feature>
<feature type="active site" description="Proton acceptor" evidence="1">
    <location>
        <position position="146"/>
    </location>
</feature>
<feature type="active site" description="Proton acceptor" evidence="1">
    <location>
        <position position="156"/>
    </location>
</feature>
<feature type="binding site" evidence="1">
    <location>
        <position position="14"/>
    </location>
    <ligand>
        <name>NAD(+)</name>
        <dbReference type="ChEBI" id="CHEBI:57540"/>
    </ligand>
</feature>
<feature type="binding site" evidence="1">
    <location>
        <begin position="20"/>
        <end position="21"/>
    </location>
    <ligand>
        <name>NAD(+)</name>
        <dbReference type="ChEBI" id="CHEBI:57540"/>
    </ligand>
</feature>
<feature type="binding site" evidence="1">
    <location>
        <position position="41"/>
    </location>
    <ligand>
        <name>NAD(+)</name>
        <dbReference type="ChEBI" id="CHEBI:57540"/>
    </ligand>
</feature>
<feature type="binding site" evidence="1">
    <location>
        <begin position="65"/>
        <end position="66"/>
    </location>
    <ligand>
        <name>NAD(+)</name>
        <dbReference type="ChEBI" id="CHEBI:57540"/>
    </ligand>
</feature>
<feature type="binding site" evidence="1">
    <location>
        <position position="93"/>
    </location>
    <ligand>
        <name>NAD(+)</name>
        <dbReference type="ChEBI" id="CHEBI:57540"/>
    </ligand>
</feature>
<feature type="binding site" evidence="1">
    <location>
        <position position="163"/>
    </location>
    <ligand>
        <name>NAD(+)</name>
        <dbReference type="ChEBI" id="CHEBI:57540"/>
    </ligand>
</feature>
<feature type="binding site" evidence="1">
    <location>
        <begin position="192"/>
        <end position="196"/>
    </location>
    <ligand>
        <name>NAD(+)</name>
        <dbReference type="ChEBI" id="CHEBI:57540"/>
    </ligand>
</feature>
<feature type="site" description="Involved in acyl-ACP binding" evidence="1">
    <location>
        <position position="204"/>
    </location>
</feature>
<protein>
    <recommendedName>
        <fullName>Enoyl-[acyl-carrier-protein] reductase [NADH] 2</fullName>
        <ecNumber>1.3.1.9</ecNumber>
    </recommendedName>
    <alternativeName>
        <fullName>NADH-dependent enoyl-ACP reductase 2</fullName>
    </alternativeName>
</protein>
<keyword id="KW-0997">Cell inner membrane</keyword>
<keyword id="KW-1003">Cell membrane</keyword>
<keyword id="KW-0275">Fatty acid biosynthesis</keyword>
<keyword id="KW-0276">Fatty acid metabolism</keyword>
<keyword id="KW-0444">Lipid biosynthesis</keyword>
<keyword id="KW-0443">Lipid metabolism</keyword>
<keyword id="KW-0472">Membrane</keyword>
<keyword id="KW-0520">NAD</keyword>
<keyword id="KW-0560">Oxidoreductase</keyword>
<keyword id="KW-1185">Reference proteome</keyword>